<comment type="similarity">
    <text evidence="1">Belongs to the UPF0337 (CsbD) family.</text>
</comment>
<dbReference type="EMBL" id="AL513382">
    <property type="protein sequence ID" value="CAD09224.1"/>
    <property type="molecule type" value="Genomic_DNA"/>
</dbReference>
<dbReference type="EMBL" id="AE014613">
    <property type="protein sequence ID" value="AAO71610.1"/>
    <property type="molecule type" value="Genomic_DNA"/>
</dbReference>
<dbReference type="RefSeq" id="NP_458538.1">
    <property type="nucleotide sequence ID" value="NC_003198.1"/>
</dbReference>
<dbReference type="SMR" id="Q8XEL4"/>
<dbReference type="STRING" id="220341.gene:17588268"/>
<dbReference type="KEGG" id="stt:t4146"/>
<dbReference type="KEGG" id="sty:STY4436"/>
<dbReference type="PATRIC" id="fig|220341.7.peg.4536"/>
<dbReference type="eggNOG" id="COG3237">
    <property type="taxonomic scope" value="Bacteria"/>
</dbReference>
<dbReference type="HOGENOM" id="CLU_135567_4_1_6"/>
<dbReference type="OMA" id="WERDTRW"/>
<dbReference type="Proteomes" id="UP000000541">
    <property type="component" value="Chromosome"/>
</dbReference>
<dbReference type="Proteomes" id="UP000002670">
    <property type="component" value="Chromosome"/>
</dbReference>
<dbReference type="FunFam" id="1.10.1470.10:FF:000001">
    <property type="entry name" value="CsbD family protein"/>
    <property type="match status" value="1"/>
</dbReference>
<dbReference type="Gene3D" id="1.10.1470.10">
    <property type="entry name" value="YjbJ"/>
    <property type="match status" value="1"/>
</dbReference>
<dbReference type="InterPro" id="IPR008462">
    <property type="entry name" value="CsbD"/>
</dbReference>
<dbReference type="InterPro" id="IPR050423">
    <property type="entry name" value="UPF0337_stress_rsp"/>
</dbReference>
<dbReference type="InterPro" id="IPR026042">
    <property type="entry name" value="YjbJ"/>
</dbReference>
<dbReference type="InterPro" id="IPR036629">
    <property type="entry name" value="YjbJ_sf"/>
</dbReference>
<dbReference type="NCBIfam" id="NF007748">
    <property type="entry name" value="PRK10428.1"/>
    <property type="match status" value="1"/>
</dbReference>
<dbReference type="PANTHER" id="PTHR34977">
    <property type="entry name" value="UPF0337 PROTEIN YJBJ"/>
    <property type="match status" value="1"/>
</dbReference>
<dbReference type="PANTHER" id="PTHR34977:SF1">
    <property type="entry name" value="UPF0337 PROTEIN YJBJ"/>
    <property type="match status" value="1"/>
</dbReference>
<dbReference type="Pfam" id="PF05532">
    <property type="entry name" value="CsbD"/>
    <property type="match status" value="1"/>
</dbReference>
<dbReference type="PIRSF" id="PIRSF039008">
    <property type="entry name" value="YjbJ"/>
    <property type="match status" value="1"/>
</dbReference>
<dbReference type="SUPFAM" id="SSF69047">
    <property type="entry name" value="Hypothetical protein YjbJ"/>
    <property type="match status" value="1"/>
</dbReference>
<reference key="1">
    <citation type="journal article" date="2001" name="Nature">
        <title>Complete genome sequence of a multiple drug resistant Salmonella enterica serovar Typhi CT18.</title>
        <authorList>
            <person name="Parkhill J."/>
            <person name="Dougan G."/>
            <person name="James K.D."/>
            <person name="Thomson N.R."/>
            <person name="Pickard D."/>
            <person name="Wain J."/>
            <person name="Churcher C.M."/>
            <person name="Mungall K.L."/>
            <person name="Bentley S.D."/>
            <person name="Holden M.T.G."/>
            <person name="Sebaihia M."/>
            <person name="Baker S."/>
            <person name="Basham D."/>
            <person name="Brooks K."/>
            <person name="Chillingworth T."/>
            <person name="Connerton P."/>
            <person name="Cronin A."/>
            <person name="Davis P."/>
            <person name="Davies R.M."/>
            <person name="Dowd L."/>
            <person name="White N."/>
            <person name="Farrar J."/>
            <person name="Feltwell T."/>
            <person name="Hamlin N."/>
            <person name="Haque A."/>
            <person name="Hien T.T."/>
            <person name="Holroyd S."/>
            <person name="Jagels K."/>
            <person name="Krogh A."/>
            <person name="Larsen T.S."/>
            <person name="Leather S."/>
            <person name="Moule S."/>
            <person name="O'Gaora P."/>
            <person name="Parry C."/>
            <person name="Quail M.A."/>
            <person name="Rutherford K.M."/>
            <person name="Simmonds M."/>
            <person name="Skelton J."/>
            <person name="Stevens K."/>
            <person name="Whitehead S."/>
            <person name="Barrell B.G."/>
        </authorList>
    </citation>
    <scope>NUCLEOTIDE SEQUENCE [LARGE SCALE GENOMIC DNA]</scope>
    <source>
        <strain>CT18</strain>
    </source>
</reference>
<reference key="2">
    <citation type="journal article" date="2003" name="J. Bacteriol.">
        <title>Comparative genomics of Salmonella enterica serovar Typhi strains Ty2 and CT18.</title>
        <authorList>
            <person name="Deng W."/>
            <person name="Liou S.-R."/>
            <person name="Plunkett G. III"/>
            <person name="Mayhew G.F."/>
            <person name="Rose D.J."/>
            <person name="Burland V."/>
            <person name="Kodoyianni V."/>
            <person name="Schwartz D.C."/>
            <person name="Blattner F.R."/>
        </authorList>
    </citation>
    <scope>NUCLEOTIDE SEQUENCE [LARGE SCALE GENOMIC DNA]</scope>
    <source>
        <strain>ATCC 700931 / Ty2</strain>
    </source>
</reference>
<accession>Q8XEL4</accession>
<accession>Q7ALT7</accession>
<proteinExistence type="inferred from homology"/>
<name>YJBJ_SALTI</name>
<protein>
    <recommendedName>
        <fullName>UPF0337 protein YjbJ</fullName>
    </recommendedName>
</protein>
<organism>
    <name type="scientific">Salmonella typhi</name>
    <dbReference type="NCBI Taxonomy" id="90370"/>
    <lineage>
        <taxon>Bacteria</taxon>
        <taxon>Pseudomonadati</taxon>
        <taxon>Pseudomonadota</taxon>
        <taxon>Gammaproteobacteria</taxon>
        <taxon>Enterobacterales</taxon>
        <taxon>Enterobacteriaceae</taxon>
        <taxon>Salmonella</taxon>
    </lineage>
</organism>
<gene>
    <name type="primary">yjbJ</name>
    <name type="ordered locus">STY4436</name>
    <name type="ordered locus">t4146</name>
</gene>
<evidence type="ECO:0000305" key="1"/>
<sequence>MMNKDEAGGNWKQFKGKMKEQWGKLTDDDMTVIEGKRDQLVGKIQERYGYQKDQAEKEVVDWETRNNYRW</sequence>
<feature type="chain" id="PRO_0000210029" description="UPF0337 protein YjbJ">
    <location>
        <begin position="1"/>
        <end position="70"/>
    </location>
</feature>